<feature type="chain" id="PRO_0000341036" description="Ribosome-recycling factor">
    <location>
        <begin position="1"/>
        <end position="187"/>
    </location>
</feature>
<proteinExistence type="inferred from homology"/>
<gene>
    <name evidence="1" type="primary">frr</name>
    <name type="ordered locus">RPD_2854</name>
</gene>
<comment type="function">
    <text evidence="1">Responsible for the release of ribosomes from messenger RNA at the termination of protein biosynthesis. May increase the efficiency of translation by recycling ribosomes from one round of translation to another.</text>
</comment>
<comment type="subcellular location">
    <subcellularLocation>
        <location evidence="1">Cytoplasm</location>
    </subcellularLocation>
</comment>
<comment type="similarity">
    <text evidence="1">Belongs to the RRF family.</text>
</comment>
<dbReference type="EMBL" id="CP000283">
    <property type="protein sequence ID" value="ABE40082.1"/>
    <property type="molecule type" value="Genomic_DNA"/>
</dbReference>
<dbReference type="SMR" id="Q136A7"/>
<dbReference type="STRING" id="316057.RPD_2854"/>
<dbReference type="KEGG" id="rpd:RPD_2854"/>
<dbReference type="eggNOG" id="COG0233">
    <property type="taxonomic scope" value="Bacteria"/>
</dbReference>
<dbReference type="HOGENOM" id="CLU_073981_2_0_5"/>
<dbReference type="BioCyc" id="RPAL316057:RPD_RS14340-MONOMER"/>
<dbReference type="Proteomes" id="UP000001818">
    <property type="component" value="Chromosome"/>
</dbReference>
<dbReference type="GO" id="GO:0005829">
    <property type="term" value="C:cytosol"/>
    <property type="evidence" value="ECO:0007669"/>
    <property type="project" value="GOC"/>
</dbReference>
<dbReference type="GO" id="GO:0043023">
    <property type="term" value="F:ribosomal large subunit binding"/>
    <property type="evidence" value="ECO:0007669"/>
    <property type="project" value="TreeGrafter"/>
</dbReference>
<dbReference type="GO" id="GO:0002184">
    <property type="term" value="P:cytoplasmic translational termination"/>
    <property type="evidence" value="ECO:0007669"/>
    <property type="project" value="TreeGrafter"/>
</dbReference>
<dbReference type="CDD" id="cd00520">
    <property type="entry name" value="RRF"/>
    <property type="match status" value="1"/>
</dbReference>
<dbReference type="FunFam" id="1.10.132.20:FF:000001">
    <property type="entry name" value="Ribosome-recycling factor"/>
    <property type="match status" value="1"/>
</dbReference>
<dbReference type="FunFam" id="3.30.1360.40:FF:000001">
    <property type="entry name" value="Ribosome-recycling factor"/>
    <property type="match status" value="1"/>
</dbReference>
<dbReference type="Gene3D" id="3.30.1360.40">
    <property type="match status" value="1"/>
</dbReference>
<dbReference type="Gene3D" id="1.10.132.20">
    <property type="entry name" value="Ribosome-recycling factor"/>
    <property type="match status" value="1"/>
</dbReference>
<dbReference type="HAMAP" id="MF_00040">
    <property type="entry name" value="RRF"/>
    <property type="match status" value="1"/>
</dbReference>
<dbReference type="InterPro" id="IPR002661">
    <property type="entry name" value="Ribosome_recyc_fac"/>
</dbReference>
<dbReference type="InterPro" id="IPR023584">
    <property type="entry name" value="Ribosome_recyc_fac_dom"/>
</dbReference>
<dbReference type="InterPro" id="IPR036191">
    <property type="entry name" value="RRF_sf"/>
</dbReference>
<dbReference type="NCBIfam" id="TIGR00496">
    <property type="entry name" value="frr"/>
    <property type="match status" value="1"/>
</dbReference>
<dbReference type="PANTHER" id="PTHR20982:SF3">
    <property type="entry name" value="MITOCHONDRIAL RIBOSOME RECYCLING FACTOR PSEUDO 1"/>
    <property type="match status" value="1"/>
</dbReference>
<dbReference type="PANTHER" id="PTHR20982">
    <property type="entry name" value="RIBOSOME RECYCLING FACTOR"/>
    <property type="match status" value="1"/>
</dbReference>
<dbReference type="Pfam" id="PF01765">
    <property type="entry name" value="RRF"/>
    <property type="match status" value="1"/>
</dbReference>
<dbReference type="SUPFAM" id="SSF55194">
    <property type="entry name" value="Ribosome recycling factor, RRF"/>
    <property type="match status" value="1"/>
</dbReference>
<evidence type="ECO:0000255" key="1">
    <source>
        <dbReference type="HAMAP-Rule" id="MF_00040"/>
    </source>
</evidence>
<reference key="1">
    <citation type="submission" date="2006-03" db="EMBL/GenBank/DDBJ databases">
        <title>Complete sequence of Rhodopseudomonas palustris BisB5.</title>
        <authorList>
            <consortium name="US DOE Joint Genome Institute"/>
            <person name="Copeland A."/>
            <person name="Lucas S."/>
            <person name="Lapidus A."/>
            <person name="Barry K."/>
            <person name="Detter J.C."/>
            <person name="Glavina del Rio T."/>
            <person name="Hammon N."/>
            <person name="Israni S."/>
            <person name="Dalin E."/>
            <person name="Tice H."/>
            <person name="Pitluck S."/>
            <person name="Chain P."/>
            <person name="Malfatti S."/>
            <person name="Shin M."/>
            <person name="Vergez L."/>
            <person name="Schmutz J."/>
            <person name="Larimer F."/>
            <person name="Land M."/>
            <person name="Hauser L."/>
            <person name="Pelletier D.A."/>
            <person name="Kyrpides N."/>
            <person name="Lykidis A."/>
            <person name="Oda Y."/>
            <person name="Harwood C.S."/>
            <person name="Richardson P."/>
        </authorList>
    </citation>
    <scope>NUCLEOTIDE SEQUENCE [LARGE SCALE GENOMIC DNA]</scope>
    <source>
        <strain>BisB5</strain>
    </source>
</reference>
<organism>
    <name type="scientific">Rhodopseudomonas palustris (strain BisB5)</name>
    <dbReference type="NCBI Taxonomy" id="316057"/>
    <lineage>
        <taxon>Bacteria</taxon>
        <taxon>Pseudomonadati</taxon>
        <taxon>Pseudomonadota</taxon>
        <taxon>Alphaproteobacteria</taxon>
        <taxon>Hyphomicrobiales</taxon>
        <taxon>Nitrobacteraceae</taxon>
        <taxon>Rhodopseudomonas</taxon>
    </lineage>
</organism>
<protein>
    <recommendedName>
        <fullName evidence="1">Ribosome-recycling factor</fullName>
        <shortName evidence="1">RRF</shortName>
    </recommendedName>
    <alternativeName>
        <fullName evidence="1">Ribosome-releasing factor</fullName>
    </alternativeName>
</protein>
<name>RRF_RHOPS</name>
<accession>Q136A7</accession>
<sequence>MQSEKFDINEVKRRMHGASQALQHELGGLRTGRASASMLEPVQVDAYGTHMPLNQVATVSVPEPRLLSVQVWDKSMVKAVEKAIVDSNLGLSPATEGQVLRLRIPELNQDRRKELVKVAHKYAEAARVAVRHVRRDGLDIIKKLEKAHEISEDDQKRLDHEVQKATDATISEIDQLLANKEKEILTV</sequence>
<keyword id="KW-0963">Cytoplasm</keyword>
<keyword id="KW-0648">Protein biosynthesis</keyword>